<sequence length="290" mass="30994">MIQGSMVALVTPMHADNTLDWDSLHKLVDWHLEQGTHAIVAVGTTGESATLDVQEHLQVIKRVVDQVNGRIPVIAGTGANSTSEAVELTQAAKDVGADACLLVTPYYNKPTQEGLFLHHEYIANAVAIPQYLYNVPGRTGVDMKPETALRLAQVPNIAGIKEATGDLERARLLIDQAPPGFAIISGDDATAVELILLGGQGDISVTANVVPAAIARMCELALAGKAEEARTINTQLLPLHTAMFVESNPIPVKWAVEQLGLIQSGIRLPLTRLSAQYHQQVKTAMQLAGL</sequence>
<name>DAPA_CELJU</name>
<keyword id="KW-0028">Amino-acid biosynthesis</keyword>
<keyword id="KW-0963">Cytoplasm</keyword>
<keyword id="KW-0220">Diaminopimelate biosynthesis</keyword>
<keyword id="KW-0456">Lyase</keyword>
<keyword id="KW-0457">Lysine biosynthesis</keyword>
<keyword id="KW-1185">Reference proteome</keyword>
<keyword id="KW-0704">Schiff base</keyword>
<reference key="1">
    <citation type="journal article" date="2008" name="J. Bacteriol.">
        <title>Insights into plant cell wall degradation from the genome sequence of the soil bacterium Cellvibrio japonicus.</title>
        <authorList>
            <person name="DeBoy R.T."/>
            <person name="Mongodin E.F."/>
            <person name="Fouts D.E."/>
            <person name="Tailford L.E."/>
            <person name="Khouri H."/>
            <person name="Emerson J.B."/>
            <person name="Mohamoud Y."/>
            <person name="Watkins K."/>
            <person name="Henrissat B."/>
            <person name="Gilbert H.J."/>
            <person name="Nelson K.E."/>
        </authorList>
    </citation>
    <scope>NUCLEOTIDE SEQUENCE [LARGE SCALE GENOMIC DNA]</scope>
    <source>
        <strain>Ueda107</strain>
    </source>
</reference>
<protein>
    <recommendedName>
        <fullName evidence="1">4-hydroxy-tetrahydrodipicolinate synthase</fullName>
        <shortName evidence="1">HTPA synthase</shortName>
        <ecNumber evidence="1">4.3.3.7</ecNumber>
    </recommendedName>
</protein>
<feature type="chain" id="PRO_1000124020" description="4-hydroxy-tetrahydrodipicolinate synthase">
    <location>
        <begin position="1"/>
        <end position="290"/>
    </location>
</feature>
<feature type="active site" description="Proton donor/acceptor" evidence="1">
    <location>
        <position position="133"/>
    </location>
</feature>
<feature type="active site" description="Schiff-base intermediate with substrate" evidence="1">
    <location>
        <position position="161"/>
    </location>
</feature>
<feature type="binding site" evidence="1">
    <location>
        <position position="45"/>
    </location>
    <ligand>
        <name>pyruvate</name>
        <dbReference type="ChEBI" id="CHEBI:15361"/>
    </ligand>
</feature>
<feature type="binding site" evidence="1">
    <location>
        <position position="203"/>
    </location>
    <ligand>
        <name>pyruvate</name>
        <dbReference type="ChEBI" id="CHEBI:15361"/>
    </ligand>
</feature>
<feature type="site" description="Part of a proton relay during catalysis" evidence="1">
    <location>
        <position position="44"/>
    </location>
</feature>
<feature type="site" description="Part of a proton relay during catalysis" evidence="1">
    <location>
        <position position="107"/>
    </location>
</feature>
<proteinExistence type="inferred from homology"/>
<evidence type="ECO:0000255" key="1">
    <source>
        <dbReference type="HAMAP-Rule" id="MF_00418"/>
    </source>
</evidence>
<evidence type="ECO:0000305" key="2"/>
<accession>B3PC19</accession>
<dbReference type="EC" id="4.3.3.7" evidence="1"/>
<dbReference type="EMBL" id="CP000934">
    <property type="protein sequence ID" value="ACE83136.1"/>
    <property type="molecule type" value="Genomic_DNA"/>
</dbReference>
<dbReference type="RefSeq" id="WP_012488423.1">
    <property type="nucleotide sequence ID" value="NC_010995.1"/>
</dbReference>
<dbReference type="SMR" id="B3PC19"/>
<dbReference type="STRING" id="498211.CJA_2830"/>
<dbReference type="KEGG" id="cja:CJA_2830"/>
<dbReference type="eggNOG" id="COG0329">
    <property type="taxonomic scope" value="Bacteria"/>
</dbReference>
<dbReference type="HOGENOM" id="CLU_049343_7_1_6"/>
<dbReference type="OrthoDB" id="9782828at2"/>
<dbReference type="UniPathway" id="UPA00034">
    <property type="reaction ID" value="UER00017"/>
</dbReference>
<dbReference type="Proteomes" id="UP000001036">
    <property type="component" value="Chromosome"/>
</dbReference>
<dbReference type="GO" id="GO:0005829">
    <property type="term" value="C:cytosol"/>
    <property type="evidence" value="ECO:0007669"/>
    <property type="project" value="TreeGrafter"/>
</dbReference>
<dbReference type="GO" id="GO:0008840">
    <property type="term" value="F:4-hydroxy-tetrahydrodipicolinate synthase activity"/>
    <property type="evidence" value="ECO:0007669"/>
    <property type="project" value="UniProtKB-UniRule"/>
</dbReference>
<dbReference type="GO" id="GO:0019877">
    <property type="term" value="P:diaminopimelate biosynthetic process"/>
    <property type="evidence" value="ECO:0007669"/>
    <property type="project" value="UniProtKB-UniRule"/>
</dbReference>
<dbReference type="GO" id="GO:0009089">
    <property type="term" value="P:lysine biosynthetic process via diaminopimelate"/>
    <property type="evidence" value="ECO:0007669"/>
    <property type="project" value="UniProtKB-UniRule"/>
</dbReference>
<dbReference type="CDD" id="cd00950">
    <property type="entry name" value="DHDPS"/>
    <property type="match status" value="1"/>
</dbReference>
<dbReference type="Gene3D" id="3.20.20.70">
    <property type="entry name" value="Aldolase class I"/>
    <property type="match status" value="1"/>
</dbReference>
<dbReference type="HAMAP" id="MF_00418">
    <property type="entry name" value="DapA"/>
    <property type="match status" value="1"/>
</dbReference>
<dbReference type="InterPro" id="IPR013785">
    <property type="entry name" value="Aldolase_TIM"/>
</dbReference>
<dbReference type="InterPro" id="IPR005263">
    <property type="entry name" value="DapA"/>
</dbReference>
<dbReference type="InterPro" id="IPR002220">
    <property type="entry name" value="DapA-like"/>
</dbReference>
<dbReference type="InterPro" id="IPR020625">
    <property type="entry name" value="Schiff_base-form_aldolases_AS"/>
</dbReference>
<dbReference type="InterPro" id="IPR020624">
    <property type="entry name" value="Schiff_base-form_aldolases_CS"/>
</dbReference>
<dbReference type="NCBIfam" id="TIGR00674">
    <property type="entry name" value="dapA"/>
    <property type="match status" value="1"/>
</dbReference>
<dbReference type="PANTHER" id="PTHR12128:SF66">
    <property type="entry name" value="4-HYDROXY-2-OXOGLUTARATE ALDOLASE, MITOCHONDRIAL"/>
    <property type="match status" value="1"/>
</dbReference>
<dbReference type="PANTHER" id="PTHR12128">
    <property type="entry name" value="DIHYDRODIPICOLINATE SYNTHASE"/>
    <property type="match status" value="1"/>
</dbReference>
<dbReference type="Pfam" id="PF00701">
    <property type="entry name" value="DHDPS"/>
    <property type="match status" value="1"/>
</dbReference>
<dbReference type="PIRSF" id="PIRSF001365">
    <property type="entry name" value="DHDPS"/>
    <property type="match status" value="1"/>
</dbReference>
<dbReference type="PRINTS" id="PR00146">
    <property type="entry name" value="DHPICSNTHASE"/>
</dbReference>
<dbReference type="SMART" id="SM01130">
    <property type="entry name" value="DHDPS"/>
    <property type="match status" value="1"/>
</dbReference>
<dbReference type="SUPFAM" id="SSF51569">
    <property type="entry name" value="Aldolase"/>
    <property type="match status" value="1"/>
</dbReference>
<dbReference type="PROSITE" id="PS00665">
    <property type="entry name" value="DHDPS_1"/>
    <property type="match status" value="1"/>
</dbReference>
<dbReference type="PROSITE" id="PS00666">
    <property type="entry name" value="DHDPS_2"/>
    <property type="match status" value="1"/>
</dbReference>
<organism>
    <name type="scientific">Cellvibrio japonicus (strain Ueda107)</name>
    <name type="common">Pseudomonas fluorescens subsp. cellulosa</name>
    <dbReference type="NCBI Taxonomy" id="498211"/>
    <lineage>
        <taxon>Bacteria</taxon>
        <taxon>Pseudomonadati</taxon>
        <taxon>Pseudomonadota</taxon>
        <taxon>Gammaproteobacteria</taxon>
        <taxon>Cellvibrionales</taxon>
        <taxon>Cellvibrionaceae</taxon>
        <taxon>Cellvibrio</taxon>
    </lineage>
</organism>
<gene>
    <name evidence="1" type="primary">dapA</name>
    <name type="ordered locus">CJA_2830</name>
</gene>
<comment type="function">
    <text evidence="1">Catalyzes the condensation of (S)-aspartate-beta-semialdehyde [(S)-ASA] and pyruvate to 4-hydroxy-tetrahydrodipicolinate (HTPA).</text>
</comment>
<comment type="catalytic activity">
    <reaction evidence="1">
        <text>L-aspartate 4-semialdehyde + pyruvate = (2S,4S)-4-hydroxy-2,3,4,5-tetrahydrodipicolinate + H2O + H(+)</text>
        <dbReference type="Rhea" id="RHEA:34171"/>
        <dbReference type="ChEBI" id="CHEBI:15361"/>
        <dbReference type="ChEBI" id="CHEBI:15377"/>
        <dbReference type="ChEBI" id="CHEBI:15378"/>
        <dbReference type="ChEBI" id="CHEBI:67139"/>
        <dbReference type="ChEBI" id="CHEBI:537519"/>
        <dbReference type="EC" id="4.3.3.7"/>
    </reaction>
</comment>
<comment type="pathway">
    <text evidence="1">Amino-acid biosynthesis; L-lysine biosynthesis via DAP pathway; (S)-tetrahydrodipicolinate from L-aspartate: step 3/4.</text>
</comment>
<comment type="subunit">
    <text evidence="1">Homotetramer; dimer of dimers.</text>
</comment>
<comment type="subcellular location">
    <subcellularLocation>
        <location evidence="1">Cytoplasm</location>
    </subcellularLocation>
</comment>
<comment type="similarity">
    <text evidence="1">Belongs to the DapA family.</text>
</comment>
<comment type="caution">
    <text evidence="2">Was originally thought to be a dihydrodipicolinate synthase (DHDPS), catalyzing the condensation of (S)-aspartate-beta-semialdehyde [(S)-ASA] and pyruvate to dihydrodipicolinate (DHDP). However, it was shown in E.coli that the product of the enzymatic reaction is not dihydrodipicolinate but in fact (4S)-4-hydroxy-2,3,4,5-tetrahydro-(2S)-dipicolinic acid (HTPA), and that the consecutive dehydration reaction leading to DHDP is not spontaneous but catalyzed by DapB.</text>
</comment>